<feature type="chain" id="PRO_0000070817" description="Chaperone protein DnaJ">
    <location>
        <begin position="1"/>
        <end position="374"/>
    </location>
</feature>
<feature type="domain" description="J" evidence="1">
    <location>
        <begin position="5"/>
        <end position="69"/>
    </location>
</feature>
<feature type="repeat" description="CXXCXGXG motif">
    <location>
        <begin position="154"/>
        <end position="161"/>
    </location>
</feature>
<feature type="repeat" description="CXXCXGXG motif">
    <location>
        <begin position="171"/>
        <end position="178"/>
    </location>
</feature>
<feature type="repeat" description="CXXCXGXG motif">
    <location>
        <begin position="197"/>
        <end position="204"/>
    </location>
</feature>
<feature type="repeat" description="CXXCXGXG motif">
    <location>
        <begin position="211"/>
        <end position="218"/>
    </location>
</feature>
<feature type="zinc finger region" description="CR-type" evidence="1">
    <location>
        <begin position="141"/>
        <end position="223"/>
    </location>
</feature>
<feature type="binding site" evidence="1">
    <location>
        <position position="154"/>
    </location>
    <ligand>
        <name>Zn(2+)</name>
        <dbReference type="ChEBI" id="CHEBI:29105"/>
        <label>1</label>
    </ligand>
</feature>
<feature type="binding site" evidence="1">
    <location>
        <position position="157"/>
    </location>
    <ligand>
        <name>Zn(2+)</name>
        <dbReference type="ChEBI" id="CHEBI:29105"/>
        <label>1</label>
    </ligand>
</feature>
<feature type="binding site" evidence="1">
    <location>
        <position position="171"/>
    </location>
    <ligand>
        <name>Zn(2+)</name>
        <dbReference type="ChEBI" id="CHEBI:29105"/>
        <label>2</label>
    </ligand>
</feature>
<feature type="binding site" evidence="1">
    <location>
        <position position="174"/>
    </location>
    <ligand>
        <name>Zn(2+)</name>
        <dbReference type="ChEBI" id="CHEBI:29105"/>
        <label>2</label>
    </ligand>
</feature>
<feature type="binding site" evidence="1">
    <location>
        <position position="197"/>
    </location>
    <ligand>
        <name>Zn(2+)</name>
        <dbReference type="ChEBI" id="CHEBI:29105"/>
        <label>2</label>
    </ligand>
</feature>
<feature type="binding site" evidence="1">
    <location>
        <position position="200"/>
    </location>
    <ligand>
        <name>Zn(2+)</name>
        <dbReference type="ChEBI" id="CHEBI:29105"/>
        <label>2</label>
    </ligand>
</feature>
<feature type="binding site" evidence="1">
    <location>
        <position position="211"/>
    </location>
    <ligand>
        <name>Zn(2+)</name>
        <dbReference type="ChEBI" id="CHEBI:29105"/>
        <label>1</label>
    </ligand>
</feature>
<feature type="binding site" evidence="1">
    <location>
        <position position="214"/>
    </location>
    <ligand>
        <name>Zn(2+)</name>
        <dbReference type="ChEBI" id="CHEBI:29105"/>
        <label>1</label>
    </ligand>
</feature>
<name>DNAJ_MESFL</name>
<organism>
    <name type="scientific">Mesoplasma florum (strain ATCC 33453 / NBRC 100688 / NCTC 11704 / L1)</name>
    <name type="common">Acholeplasma florum</name>
    <dbReference type="NCBI Taxonomy" id="265311"/>
    <lineage>
        <taxon>Bacteria</taxon>
        <taxon>Bacillati</taxon>
        <taxon>Mycoplasmatota</taxon>
        <taxon>Mollicutes</taxon>
        <taxon>Entomoplasmatales</taxon>
        <taxon>Entomoplasmataceae</taxon>
        <taxon>Mesoplasma</taxon>
    </lineage>
</organism>
<gene>
    <name evidence="1" type="primary">dnaJ</name>
    <name type="ordered locus">Mfl414</name>
</gene>
<dbReference type="EMBL" id="AE017263">
    <property type="protein sequence ID" value="AAT75773.1"/>
    <property type="molecule type" value="Genomic_DNA"/>
</dbReference>
<dbReference type="RefSeq" id="WP_011183313.1">
    <property type="nucleotide sequence ID" value="NC_006055.1"/>
</dbReference>
<dbReference type="RefSeq" id="YP_053657.1">
    <property type="nucleotide sequence ID" value="NC_006055.1"/>
</dbReference>
<dbReference type="SMR" id="Q6F150"/>
<dbReference type="STRING" id="265311.Mfl414"/>
<dbReference type="PaxDb" id="265311-Mfl414"/>
<dbReference type="EnsemblBacteria" id="AAT75773">
    <property type="protein sequence ID" value="AAT75773"/>
    <property type="gene ID" value="Mfl414"/>
</dbReference>
<dbReference type="GeneID" id="2897752"/>
<dbReference type="KEGG" id="mfl:Mfl414"/>
<dbReference type="PATRIC" id="fig|265311.5.peg.415"/>
<dbReference type="eggNOG" id="COG0484">
    <property type="taxonomic scope" value="Bacteria"/>
</dbReference>
<dbReference type="HOGENOM" id="CLU_017633_0_7_14"/>
<dbReference type="OrthoDB" id="9779889at2"/>
<dbReference type="Proteomes" id="UP000006647">
    <property type="component" value="Chromosome"/>
</dbReference>
<dbReference type="GO" id="GO:0005737">
    <property type="term" value="C:cytoplasm"/>
    <property type="evidence" value="ECO:0007669"/>
    <property type="project" value="UniProtKB-SubCell"/>
</dbReference>
<dbReference type="GO" id="GO:0005524">
    <property type="term" value="F:ATP binding"/>
    <property type="evidence" value="ECO:0007669"/>
    <property type="project" value="InterPro"/>
</dbReference>
<dbReference type="GO" id="GO:0031072">
    <property type="term" value="F:heat shock protein binding"/>
    <property type="evidence" value="ECO:0007669"/>
    <property type="project" value="InterPro"/>
</dbReference>
<dbReference type="GO" id="GO:0051082">
    <property type="term" value="F:unfolded protein binding"/>
    <property type="evidence" value="ECO:0007669"/>
    <property type="project" value="UniProtKB-UniRule"/>
</dbReference>
<dbReference type="GO" id="GO:0008270">
    <property type="term" value="F:zinc ion binding"/>
    <property type="evidence" value="ECO:0007669"/>
    <property type="project" value="UniProtKB-UniRule"/>
</dbReference>
<dbReference type="GO" id="GO:0051085">
    <property type="term" value="P:chaperone cofactor-dependent protein refolding"/>
    <property type="evidence" value="ECO:0007669"/>
    <property type="project" value="TreeGrafter"/>
</dbReference>
<dbReference type="GO" id="GO:0006260">
    <property type="term" value="P:DNA replication"/>
    <property type="evidence" value="ECO:0007669"/>
    <property type="project" value="UniProtKB-KW"/>
</dbReference>
<dbReference type="GO" id="GO:0042026">
    <property type="term" value="P:protein refolding"/>
    <property type="evidence" value="ECO:0007669"/>
    <property type="project" value="TreeGrafter"/>
</dbReference>
<dbReference type="GO" id="GO:0009408">
    <property type="term" value="P:response to heat"/>
    <property type="evidence" value="ECO:0007669"/>
    <property type="project" value="InterPro"/>
</dbReference>
<dbReference type="CDD" id="cd06257">
    <property type="entry name" value="DnaJ"/>
    <property type="match status" value="1"/>
</dbReference>
<dbReference type="CDD" id="cd10747">
    <property type="entry name" value="DnaJ_C"/>
    <property type="match status" value="1"/>
</dbReference>
<dbReference type="CDD" id="cd10719">
    <property type="entry name" value="DnaJ_zf"/>
    <property type="match status" value="1"/>
</dbReference>
<dbReference type="FunFam" id="2.60.260.20:FF:000013">
    <property type="entry name" value="DnaJ subfamily B member 11"/>
    <property type="match status" value="1"/>
</dbReference>
<dbReference type="FunFam" id="1.10.287.110:FF:000031">
    <property type="entry name" value="Molecular chaperone DnaJ"/>
    <property type="match status" value="1"/>
</dbReference>
<dbReference type="FunFam" id="2.10.230.10:FF:000002">
    <property type="entry name" value="Molecular chaperone DnaJ"/>
    <property type="match status" value="1"/>
</dbReference>
<dbReference type="Gene3D" id="1.10.287.110">
    <property type="entry name" value="DnaJ domain"/>
    <property type="match status" value="1"/>
</dbReference>
<dbReference type="Gene3D" id="2.10.230.10">
    <property type="entry name" value="Heat shock protein DnaJ, cysteine-rich domain"/>
    <property type="match status" value="1"/>
</dbReference>
<dbReference type="Gene3D" id="2.60.260.20">
    <property type="entry name" value="Urease metallochaperone UreE, N-terminal domain"/>
    <property type="match status" value="2"/>
</dbReference>
<dbReference type="HAMAP" id="MF_01152">
    <property type="entry name" value="DnaJ"/>
    <property type="match status" value="1"/>
</dbReference>
<dbReference type="InterPro" id="IPR012724">
    <property type="entry name" value="DnaJ"/>
</dbReference>
<dbReference type="InterPro" id="IPR002939">
    <property type="entry name" value="DnaJ_C"/>
</dbReference>
<dbReference type="InterPro" id="IPR001623">
    <property type="entry name" value="DnaJ_domain"/>
</dbReference>
<dbReference type="InterPro" id="IPR008971">
    <property type="entry name" value="HSP40/DnaJ_pept-bd"/>
</dbReference>
<dbReference type="InterPro" id="IPR001305">
    <property type="entry name" value="HSP_DnaJ_Cys-rich_dom"/>
</dbReference>
<dbReference type="InterPro" id="IPR036410">
    <property type="entry name" value="HSP_DnaJ_Cys-rich_dom_sf"/>
</dbReference>
<dbReference type="InterPro" id="IPR036869">
    <property type="entry name" value="J_dom_sf"/>
</dbReference>
<dbReference type="NCBIfam" id="TIGR02349">
    <property type="entry name" value="DnaJ_bact"/>
    <property type="match status" value="1"/>
</dbReference>
<dbReference type="NCBIfam" id="NF008035">
    <property type="entry name" value="PRK10767.1"/>
    <property type="match status" value="1"/>
</dbReference>
<dbReference type="NCBIfam" id="NF010889">
    <property type="entry name" value="PRK14296.1"/>
    <property type="match status" value="1"/>
</dbReference>
<dbReference type="PANTHER" id="PTHR43096:SF48">
    <property type="entry name" value="CHAPERONE PROTEIN DNAJ"/>
    <property type="match status" value="1"/>
</dbReference>
<dbReference type="PANTHER" id="PTHR43096">
    <property type="entry name" value="DNAJ HOMOLOG 1, MITOCHONDRIAL-RELATED"/>
    <property type="match status" value="1"/>
</dbReference>
<dbReference type="Pfam" id="PF00226">
    <property type="entry name" value="DnaJ"/>
    <property type="match status" value="1"/>
</dbReference>
<dbReference type="Pfam" id="PF01556">
    <property type="entry name" value="DnaJ_C"/>
    <property type="match status" value="1"/>
</dbReference>
<dbReference type="Pfam" id="PF00684">
    <property type="entry name" value="DnaJ_CXXCXGXG"/>
    <property type="match status" value="1"/>
</dbReference>
<dbReference type="PRINTS" id="PR00625">
    <property type="entry name" value="JDOMAIN"/>
</dbReference>
<dbReference type="SMART" id="SM00271">
    <property type="entry name" value="DnaJ"/>
    <property type="match status" value="1"/>
</dbReference>
<dbReference type="SUPFAM" id="SSF46565">
    <property type="entry name" value="Chaperone J-domain"/>
    <property type="match status" value="1"/>
</dbReference>
<dbReference type="SUPFAM" id="SSF57938">
    <property type="entry name" value="DnaJ/Hsp40 cysteine-rich domain"/>
    <property type="match status" value="1"/>
</dbReference>
<dbReference type="SUPFAM" id="SSF49493">
    <property type="entry name" value="HSP40/DnaJ peptide-binding domain"/>
    <property type="match status" value="2"/>
</dbReference>
<dbReference type="PROSITE" id="PS50076">
    <property type="entry name" value="DNAJ_2"/>
    <property type="match status" value="1"/>
</dbReference>
<dbReference type="PROSITE" id="PS51188">
    <property type="entry name" value="ZF_CR"/>
    <property type="match status" value="1"/>
</dbReference>
<reference key="1">
    <citation type="submission" date="2004-06" db="EMBL/GenBank/DDBJ databases">
        <authorList>
            <person name="Birren B.W."/>
            <person name="Stange-Thomann N."/>
            <person name="Hafez N."/>
            <person name="DeCaprio D."/>
            <person name="Fisher S."/>
            <person name="Butler J."/>
            <person name="Elkins T."/>
            <person name="Kodira C.D."/>
            <person name="Major J."/>
            <person name="Wang S."/>
            <person name="Nicol R."/>
            <person name="Nusbaum C."/>
        </authorList>
    </citation>
    <scope>NUCLEOTIDE SEQUENCE [LARGE SCALE GENOMIC DNA]</scope>
    <source>
        <strain>ATCC 33453 / NBRC 100688 / NCTC 11704 / L1</strain>
    </source>
</reference>
<evidence type="ECO:0000255" key="1">
    <source>
        <dbReference type="HAMAP-Rule" id="MF_01152"/>
    </source>
</evidence>
<proteinExistence type="inferred from homology"/>
<accession>Q6F150</accession>
<sequence>MAKRDYYEVLGVSKTSTEQEIKSAYRKLAKKYHPDMNKESGAEEKFKEVNEAASVLLDADKKAKYDQFGHAAFDGSSGFGGSGFGGFEDFFSNMGGGMDFGDIFSDLFGGGRSGRSSRRGPSKGQDIGLEATLTFKELVFGVNKKTILNLVKTCTKCDGVGAENPSDVHICTKCNGAGQIIVNKQMGPFQVQNQVTCDKCNGVGKEFKSKCKNCHGKGVESKREEVEIPLPKGLWPGQQFVMRGKGHASLEGGIPGDLYITIGIVKSDVFELIPNSNDLIMNYNISYLDAILGNEVIIKTLDGPVRLKIPKGVYSGQLIKVHDKGLYKNQTSDKRGDLLIKISISIPTSVSKEEKKILKELEQLSNFEPKNIID</sequence>
<protein>
    <recommendedName>
        <fullName evidence="1">Chaperone protein DnaJ</fullName>
    </recommendedName>
</protein>
<keyword id="KW-0143">Chaperone</keyword>
<keyword id="KW-0963">Cytoplasm</keyword>
<keyword id="KW-0235">DNA replication</keyword>
<keyword id="KW-0479">Metal-binding</keyword>
<keyword id="KW-1185">Reference proteome</keyword>
<keyword id="KW-0677">Repeat</keyword>
<keyword id="KW-0346">Stress response</keyword>
<keyword id="KW-0862">Zinc</keyword>
<keyword id="KW-0863">Zinc-finger</keyword>
<comment type="function">
    <text evidence="1">Participates actively in the response to hyperosmotic and heat shock by preventing the aggregation of stress-denatured proteins and by disaggregating proteins, also in an autonomous, DnaK-independent fashion. Unfolded proteins bind initially to DnaJ; upon interaction with the DnaJ-bound protein, DnaK hydrolyzes its bound ATP, resulting in the formation of a stable complex. GrpE releases ADP from DnaK; ATP binding to DnaK triggers the release of the substrate protein, thus completing the reaction cycle. Several rounds of ATP-dependent interactions between DnaJ, DnaK and GrpE are required for fully efficient folding. Also involved, together with DnaK and GrpE, in the DNA replication of plasmids through activation of initiation proteins.</text>
</comment>
<comment type="cofactor">
    <cofactor evidence="1">
        <name>Zn(2+)</name>
        <dbReference type="ChEBI" id="CHEBI:29105"/>
    </cofactor>
    <text evidence="1">Binds 2 Zn(2+) ions per monomer.</text>
</comment>
<comment type="subunit">
    <text evidence="1">Homodimer.</text>
</comment>
<comment type="subcellular location">
    <subcellularLocation>
        <location evidence="1">Cytoplasm</location>
    </subcellularLocation>
</comment>
<comment type="domain">
    <text evidence="1">The J domain is necessary and sufficient to stimulate DnaK ATPase activity. Zinc center 1 plays an important role in the autonomous, DnaK-independent chaperone activity of DnaJ. Zinc center 2 is essential for interaction with DnaK and for DnaJ activity.</text>
</comment>
<comment type="similarity">
    <text evidence="1">Belongs to the DnaJ family.</text>
</comment>